<accession>B2J5S9</accession>
<name>CYB6_NOSP7</name>
<protein>
    <recommendedName>
        <fullName evidence="1">Cytochrome b6</fullName>
    </recommendedName>
</protein>
<organism>
    <name type="scientific">Nostoc punctiforme (strain ATCC 29133 / PCC 73102)</name>
    <dbReference type="NCBI Taxonomy" id="63737"/>
    <lineage>
        <taxon>Bacteria</taxon>
        <taxon>Bacillati</taxon>
        <taxon>Cyanobacteriota</taxon>
        <taxon>Cyanophyceae</taxon>
        <taxon>Nostocales</taxon>
        <taxon>Nostocaceae</taxon>
        <taxon>Nostoc</taxon>
    </lineage>
</organism>
<gene>
    <name evidence="1" type="primary">petB</name>
    <name type="ordered locus">Npun_F0310</name>
</gene>
<comment type="function">
    <text evidence="1">Component of the cytochrome b6-f complex, which mediates electron transfer between photosystem II (PSII) and photosystem I (PSI), cyclic electron flow around PSI, and state transitions.</text>
</comment>
<comment type="cofactor">
    <cofactor evidence="1">
        <name>heme b</name>
        <dbReference type="ChEBI" id="CHEBI:60344"/>
    </cofactor>
    <text evidence="1">Binds 2 heme b groups non-covalently with two histidine residues as axial ligands.</text>
</comment>
<comment type="cofactor">
    <cofactor evidence="1">
        <name>heme c</name>
        <dbReference type="ChEBI" id="CHEBI:61717"/>
    </cofactor>
    <text evidence="1">Binds one heme group covalently by a single cysteine link with no axial amino acid ligand. This heme was named heme ci.</text>
</comment>
<comment type="subunit">
    <text evidence="1">The 4 large subunits of the cytochrome b6-f complex are cytochrome b6, subunit IV (17 kDa polypeptide, PetD), cytochrome f and the Rieske protein, while the 4 small subunits are PetG, PetL, PetM and PetN. The complex functions as a dimer.</text>
</comment>
<comment type="subcellular location">
    <subcellularLocation>
        <location evidence="1">Cellular thylakoid membrane</location>
        <topology evidence="1">Multi-pass membrane protein</topology>
    </subcellularLocation>
</comment>
<comment type="miscellaneous">
    <text evidence="1">Heme 1 (or BH or b566) is high-potential and absorbs at about 566 nm, and heme 2 (or BL or b562) is low-potential and absorbs at about 562 nm.</text>
</comment>
<comment type="similarity">
    <text evidence="1">Belongs to the cytochrome b family. PetB subfamily.</text>
</comment>
<proteinExistence type="inferred from homology"/>
<keyword id="KW-0249">Electron transport</keyword>
<keyword id="KW-0349">Heme</keyword>
<keyword id="KW-0408">Iron</keyword>
<keyword id="KW-0472">Membrane</keyword>
<keyword id="KW-0479">Metal-binding</keyword>
<keyword id="KW-0602">Photosynthesis</keyword>
<keyword id="KW-1185">Reference proteome</keyword>
<keyword id="KW-0793">Thylakoid</keyword>
<keyword id="KW-0812">Transmembrane</keyword>
<keyword id="KW-1133">Transmembrane helix</keyword>
<keyword id="KW-0813">Transport</keyword>
<reference key="1">
    <citation type="journal article" date="2013" name="Plant Physiol.">
        <title>A Nostoc punctiforme Sugar Transporter Necessary to Establish a Cyanobacterium-Plant Symbiosis.</title>
        <authorList>
            <person name="Ekman M."/>
            <person name="Picossi S."/>
            <person name="Campbell E.L."/>
            <person name="Meeks J.C."/>
            <person name="Flores E."/>
        </authorList>
    </citation>
    <scope>NUCLEOTIDE SEQUENCE [LARGE SCALE GENOMIC DNA]</scope>
    <source>
        <strain>ATCC 29133 / PCC 73102</strain>
    </source>
</reference>
<evidence type="ECO:0000255" key="1">
    <source>
        <dbReference type="HAMAP-Rule" id="MF_00633"/>
    </source>
</evidence>
<sequence length="215" mass="24316">MANVYDWFEERLEIQALAEDVTSKYVPPHVNIFYCLGGITLVCFLIQFATGFAMTFYYRPTVTEAFSSVEYIMNEVNFGWLIRSIHRWSASMMVLMMILHVFRVYLTGGFKKPRELTWVSGVILAVITVSFGVTGYSLPWDQVGYWAVKIVSGVPEAIPVVGVLISDLLRGGSSVGQATLTRYYSAHTFVLPWLIAVFMLFHFLMIRKQGISGPL</sequence>
<dbReference type="EMBL" id="CP001037">
    <property type="protein sequence ID" value="ACC79095.1"/>
    <property type="molecule type" value="Genomic_DNA"/>
</dbReference>
<dbReference type="RefSeq" id="WP_012407121.1">
    <property type="nucleotide sequence ID" value="NC_010628.1"/>
</dbReference>
<dbReference type="SMR" id="B2J5S9"/>
<dbReference type="STRING" id="63737.Npun_F0310"/>
<dbReference type="EnsemblBacteria" id="ACC79095">
    <property type="protein sequence ID" value="ACC79095"/>
    <property type="gene ID" value="Npun_F0310"/>
</dbReference>
<dbReference type="KEGG" id="npu:Npun_F0310"/>
<dbReference type="eggNOG" id="COG1290">
    <property type="taxonomic scope" value="Bacteria"/>
</dbReference>
<dbReference type="HOGENOM" id="CLU_031114_0_2_3"/>
<dbReference type="OrthoDB" id="9804503at2"/>
<dbReference type="PhylomeDB" id="B2J5S9"/>
<dbReference type="Proteomes" id="UP000001191">
    <property type="component" value="Chromosome"/>
</dbReference>
<dbReference type="GO" id="GO:0031676">
    <property type="term" value="C:plasma membrane-derived thylakoid membrane"/>
    <property type="evidence" value="ECO:0007669"/>
    <property type="project" value="UniProtKB-SubCell"/>
</dbReference>
<dbReference type="GO" id="GO:0045158">
    <property type="term" value="F:electron transporter, transferring electrons within cytochrome b6/f complex of photosystem II activity"/>
    <property type="evidence" value="ECO:0007669"/>
    <property type="project" value="UniProtKB-UniRule"/>
</dbReference>
<dbReference type="GO" id="GO:0046872">
    <property type="term" value="F:metal ion binding"/>
    <property type="evidence" value="ECO:0007669"/>
    <property type="project" value="UniProtKB-KW"/>
</dbReference>
<dbReference type="GO" id="GO:0016491">
    <property type="term" value="F:oxidoreductase activity"/>
    <property type="evidence" value="ECO:0007669"/>
    <property type="project" value="InterPro"/>
</dbReference>
<dbReference type="GO" id="GO:0015979">
    <property type="term" value="P:photosynthesis"/>
    <property type="evidence" value="ECO:0007669"/>
    <property type="project" value="UniProtKB-UniRule"/>
</dbReference>
<dbReference type="GO" id="GO:0022904">
    <property type="term" value="P:respiratory electron transport chain"/>
    <property type="evidence" value="ECO:0007669"/>
    <property type="project" value="InterPro"/>
</dbReference>
<dbReference type="CDD" id="cd00284">
    <property type="entry name" value="Cytochrome_b_N"/>
    <property type="match status" value="1"/>
</dbReference>
<dbReference type="FunFam" id="1.20.810.10:FF:000001">
    <property type="entry name" value="Cytochrome b6"/>
    <property type="match status" value="1"/>
</dbReference>
<dbReference type="Gene3D" id="1.20.810.10">
    <property type="entry name" value="Cytochrome Bc1 Complex, Chain C"/>
    <property type="match status" value="1"/>
</dbReference>
<dbReference type="HAMAP" id="MF_00633">
    <property type="entry name" value="Cytb6_f_cytb6"/>
    <property type="match status" value="1"/>
</dbReference>
<dbReference type="InterPro" id="IPR005797">
    <property type="entry name" value="Cyt_b/b6_N"/>
</dbReference>
<dbReference type="InterPro" id="IPR023530">
    <property type="entry name" value="Cyt_B6_PetB"/>
</dbReference>
<dbReference type="InterPro" id="IPR027387">
    <property type="entry name" value="Cytb/b6-like_sf"/>
</dbReference>
<dbReference type="InterPro" id="IPR048259">
    <property type="entry name" value="Cytochrome_b_N_euk/bac"/>
</dbReference>
<dbReference type="InterPro" id="IPR016174">
    <property type="entry name" value="Di-haem_cyt_TM"/>
</dbReference>
<dbReference type="NCBIfam" id="NF002990">
    <property type="entry name" value="PRK03735.1"/>
    <property type="match status" value="1"/>
</dbReference>
<dbReference type="PANTHER" id="PTHR19271">
    <property type="entry name" value="CYTOCHROME B"/>
    <property type="match status" value="1"/>
</dbReference>
<dbReference type="PANTHER" id="PTHR19271:SF16">
    <property type="entry name" value="CYTOCHROME B"/>
    <property type="match status" value="1"/>
</dbReference>
<dbReference type="Pfam" id="PF00033">
    <property type="entry name" value="Cytochrome_B"/>
    <property type="match status" value="1"/>
</dbReference>
<dbReference type="PIRSF" id="PIRSF000032">
    <property type="entry name" value="Cytochrome_b6"/>
    <property type="match status" value="1"/>
</dbReference>
<dbReference type="SUPFAM" id="SSF81342">
    <property type="entry name" value="Transmembrane di-heme cytochromes"/>
    <property type="match status" value="1"/>
</dbReference>
<dbReference type="PROSITE" id="PS51002">
    <property type="entry name" value="CYTB_NTER"/>
    <property type="match status" value="1"/>
</dbReference>
<feature type="chain" id="PRO_1000130666" description="Cytochrome b6">
    <location>
        <begin position="1"/>
        <end position="215"/>
    </location>
</feature>
<feature type="transmembrane region" description="Helical" evidence="1">
    <location>
        <begin position="32"/>
        <end position="52"/>
    </location>
</feature>
<feature type="transmembrane region" description="Helical" evidence="1">
    <location>
        <begin position="90"/>
        <end position="110"/>
    </location>
</feature>
<feature type="transmembrane region" description="Helical" evidence="1">
    <location>
        <begin position="116"/>
        <end position="136"/>
    </location>
</feature>
<feature type="transmembrane region" description="Helical" evidence="1">
    <location>
        <begin position="186"/>
        <end position="206"/>
    </location>
</feature>
<feature type="binding site" description="covalent" evidence="1">
    <location>
        <position position="35"/>
    </location>
    <ligand>
        <name>heme c</name>
        <dbReference type="ChEBI" id="CHEBI:61717"/>
    </ligand>
</feature>
<feature type="binding site" description="axial binding residue" evidence="1">
    <location>
        <position position="86"/>
    </location>
    <ligand>
        <name>heme b</name>
        <dbReference type="ChEBI" id="CHEBI:60344"/>
        <label>2</label>
    </ligand>
    <ligandPart>
        <name>Fe</name>
        <dbReference type="ChEBI" id="CHEBI:18248"/>
    </ligandPart>
</feature>
<feature type="binding site" description="axial binding residue" evidence="1">
    <location>
        <position position="100"/>
    </location>
    <ligand>
        <name>heme b</name>
        <dbReference type="ChEBI" id="CHEBI:60344"/>
        <label>1</label>
    </ligand>
    <ligandPart>
        <name>Fe</name>
        <dbReference type="ChEBI" id="CHEBI:18248"/>
    </ligandPart>
</feature>
<feature type="binding site" description="axial binding residue" evidence="1">
    <location>
        <position position="187"/>
    </location>
    <ligand>
        <name>heme b</name>
        <dbReference type="ChEBI" id="CHEBI:60344"/>
        <label>2</label>
    </ligand>
    <ligandPart>
        <name>Fe</name>
        <dbReference type="ChEBI" id="CHEBI:18248"/>
    </ligandPart>
</feature>
<feature type="binding site" description="axial binding residue" evidence="1">
    <location>
        <position position="202"/>
    </location>
    <ligand>
        <name>heme b</name>
        <dbReference type="ChEBI" id="CHEBI:60344"/>
        <label>1</label>
    </ligand>
    <ligandPart>
        <name>Fe</name>
        <dbReference type="ChEBI" id="CHEBI:18248"/>
    </ligandPart>
</feature>